<feature type="chain" id="PRO_0000172019" description="Putative pre-16S rRNA nuclease">
    <location>
        <begin position="1"/>
        <end position="140"/>
    </location>
</feature>
<name>YQGF_HALH5</name>
<dbReference type="EC" id="3.1.-.-" evidence="1"/>
<dbReference type="EMBL" id="BA000004">
    <property type="protein sequence ID" value="BAB04988.1"/>
    <property type="molecule type" value="Genomic_DNA"/>
</dbReference>
<dbReference type="PIR" id="E83808">
    <property type="entry name" value="E83808"/>
</dbReference>
<dbReference type="RefSeq" id="WP_010897437.1">
    <property type="nucleotide sequence ID" value="NC_002570.2"/>
</dbReference>
<dbReference type="SMR" id="Q9KDE4"/>
<dbReference type="STRING" id="272558.gene:10727163"/>
<dbReference type="KEGG" id="bha:BH1269"/>
<dbReference type="eggNOG" id="COG0816">
    <property type="taxonomic scope" value="Bacteria"/>
</dbReference>
<dbReference type="HOGENOM" id="CLU_098240_2_0_9"/>
<dbReference type="OrthoDB" id="9796140at2"/>
<dbReference type="Proteomes" id="UP000001258">
    <property type="component" value="Chromosome"/>
</dbReference>
<dbReference type="GO" id="GO:0005829">
    <property type="term" value="C:cytosol"/>
    <property type="evidence" value="ECO:0007669"/>
    <property type="project" value="TreeGrafter"/>
</dbReference>
<dbReference type="GO" id="GO:0004518">
    <property type="term" value="F:nuclease activity"/>
    <property type="evidence" value="ECO:0007669"/>
    <property type="project" value="UniProtKB-KW"/>
</dbReference>
<dbReference type="GO" id="GO:0000967">
    <property type="term" value="P:rRNA 5'-end processing"/>
    <property type="evidence" value="ECO:0007669"/>
    <property type="project" value="UniProtKB-UniRule"/>
</dbReference>
<dbReference type="CDD" id="cd16964">
    <property type="entry name" value="YqgF"/>
    <property type="match status" value="1"/>
</dbReference>
<dbReference type="Gene3D" id="3.30.420.140">
    <property type="entry name" value="YqgF/RNase H-like domain"/>
    <property type="match status" value="1"/>
</dbReference>
<dbReference type="HAMAP" id="MF_00651">
    <property type="entry name" value="Nuclease_YqgF"/>
    <property type="match status" value="1"/>
</dbReference>
<dbReference type="InterPro" id="IPR012337">
    <property type="entry name" value="RNaseH-like_sf"/>
</dbReference>
<dbReference type="InterPro" id="IPR005227">
    <property type="entry name" value="YqgF"/>
</dbReference>
<dbReference type="InterPro" id="IPR006641">
    <property type="entry name" value="YqgF/RNaseH-like_dom"/>
</dbReference>
<dbReference type="InterPro" id="IPR037027">
    <property type="entry name" value="YqgF/RNaseH-like_dom_sf"/>
</dbReference>
<dbReference type="NCBIfam" id="TIGR00250">
    <property type="entry name" value="RNAse_H_YqgF"/>
    <property type="match status" value="1"/>
</dbReference>
<dbReference type="PANTHER" id="PTHR33317">
    <property type="entry name" value="POLYNUCLEOTIDYL TRANSFERASE, RIBONUCLEASE H-LIKE SUPERFAMILY PROTEIN"/>
    <property type="match status" value="1"/>
</dbReference>
<dbReference type="PANTHER" id="PTHR33317:SF4">
    <property type="entry name" value="POLYNUCLEOTIDYL TRANSFERASE, RIBONUCLEASE H-LIKE SUPERFAMILY PROTEIN"/>
    <property type="match status" value="1"/>
</dbReference>
<dbReference type="Pfam" id="PF03652">
    <property type="entry name" value="RuvX"/>
    <property type="match status" value="1"/>
</dbReference>
<dbReference type="SMART" id="SM00732">
    <property type="entry name" value="YqgFc"/>
    <property type="match status" value="1"/>
</dbReference>
<dbReference type="SUPFAM" id="SSF53098">
    <property type="entry name" value="Ribonuclease H-like"/>
    <property type="match status" value="1"/>
</dbReference>
<evidence type="ECO:0000255" key="1">
    <source>
        <dbReference type="HAMAP-Rule" id="MF_00651"/>
    </source>
</evidence>
<protein>
    <recommendedName>
        <fullName evidence="1">Putative pre-16S rRNA nuclease</fullName>
        <ecNumber evidence="1">3.1.-.-</ecNumber>
    </recommendedName>
</protein>
<keyword id="KW-0963">Cytoplasm</keyword>
<keyword id="KW-0378">Hydrolase</keyword>
<keyword id="KW-0540">Nuclease</keyword>
<keyword id="KW-1185">Reference proteome</keyword>
<keyword id="KW-0690">Ribosome biogenesis</keyword>
<comment type="function">
    <text evidence="1">Could be a nuclease involved in processing of the 5'-end of pre-16S rRNA.</text>
</comment>
<comment type="subcellular location">
    <subcellularLocation>
        <location evidence="1">Cytoplasm</location>
    </subcellularLocation>
</comment>
<comment type="similarity">
    <text evidence="1">Belongs to the YqgF nuclease family.</text>
</comment>
<reference key="1">
    <citation type="journal article" date="2000" name="Nucleic Acids Res.">
        <title>Complete genome sequence of the alkaliphilic bacterium Bacillus halodurans and genomic sequence comparison with Bacillus subtilis.</title>
        <authorList>
            <person name="Takami H."/>
            <person name="Nakasone K."/>
            <person name="Takaki Y."/>
            <person name="Maeno G."/>
            <person name="Sasaki R."/>
            <person name="Masui N."/>
            <person name="Fuji F."/>
            <person name="Hirama C."/>
            <person name="Nakamura Y."/>
            <person name="Ogasawara N."/>
            <person name="Kuhara S."/>
            <person name="Horikoshi K."/>
        </authorList>
    </citation>
    <scope>NUCLEOTIDE SEQUENCE [LARGE SCALE GENOMIC DNA]</scope>
    <source>
        <strain>ATCC BAA-125 / DSM 18197 / FERM 7344 / JCM 9153 / C-125</strain>
    </source>
</reference>
<organism>
    <name type="scientific">Halalkalibacterium halodurans (strain ATCC BAA-125 / DSM 18197 / FERM 7344 / JCM 9153 / C-125)</name>
    <name type="common">Bacillus halodurans</name>
    <dbReference type="NCBI Taxonomy" id="272558"/>
    <lineage>
        <taxon>Bacteria</taxon>
        <taxon>Bacillati</taxon>
        <taxon>Bacillota</taxon>
        <taxon>Bacilli</taxon>
        <taxon>Bacillales</taxon>
        <taxon>Bacillaceae</taxon>
        <taxon>Halalkalibacterium (ex Joshi et al. 2022)</taxon>
    </lineage>
</organism>
<gene>
    <name type="ordered locus">BH1269</name>
</gene>
<proteinExistence type="inferred from homology"/>
<sequence>MRTLGLDVGTKTIGIAVSDALGWTAQGLETWRRSDANEQADFEHIASLVKEHEVTTIVIGLPKNMDGSIGPSGERSETFAAELRRYVPCEIVMWDERLTTTAAERMLISADVSRKKRKSVIDKMAAVMILQGYLDRQQLK</sequence>
<accession>Q9KDE4</accession>